<gene>
    <name type="ordered locus">PFLU_2135</name>
</gene>
<name>Y2135_PSEFS</name>
<organism>
    <name type="scientific">Pseudomonas fluorescens (strain SBW25)</name>
    <dbReference type="NCBI Taxonomy" id="216595"/>
    <lineage>
        <taxon>Bacteria</taxon>
        <taxon>Pseudomonadati</taxon>
        <taxon>Pseudomonadota</taxon>
        <taxon>Gammaproteobacteria</taxon>
        <taxon>Pseudomonadales</taxon>
        <taxon>Pseudomonadaceae</taxon>
        <taxon>Pseudomonas</taxon>
    </lineage>
</organism>
<feature type="chain" id="PRO_1000215628" description="UPF0502 protein PFLU_2135">
    <location>
        <begin position="1"/>
        <end position="217"/>
    </location>
</feature>
<accession>C3K6R3</accession>
<reference key="1">
    <citation type="journal article" date="2009" name="Genome Biol.">
        <title>Genomic and genetic analyses of diversity and plant interactions of Pseudomonas fluorescens.</title>
        <authorList>
            <person name="Silby M.W."/>
            <person name="Cerdeno-Tarraga A.M."/>
            <person name="Vernikos G.S."/>
            <person name="Giddens S.R."/>
            <person name="Jackson R.W."/>
            <person name="Preston G.M."/>
            <person name="Zhang X.-X."/>
            <person name="Moon C.D."/>
            <person name="Gehrig S.M."/>
            <person name="Godfrey S.A.C."/>
            <person name="Knight C.G."/>
            <person name="Malone J.G."/>
            <person name="Robinson Z."/>
            <person name="Spiers A.J."/>
            <person name="Harris S."/>
            <person name="Challis G.L."/>
            <person name="Yaxley A.M."/>
            <person name="Harris D."/>
            <person name="Seeger K."/>
            <person name="Murphy L."/>
            <person name="Rutter S."/>
            <person name="Squares R."/>
            <person name="Quail M.A."/>
            <person name="Saunders E."/>
            <person name="Mavromatis K."/>
            <person name="Brettin T.S."/>
            <person name="Bentley S.D."/>
            <person name="Hothersall J."/>
            <person name="Stephens E."/>
            <person name="Thomas C.M."/>
            <person name="Parkhill J."/>
            <person name="Levy S.B."/>
            <person name="Rainey P.B."/>
            <person name="Thomson N.R."/>
        </authorList>
    </citation>
    <scope>NUCLEOTIDE SEQUENCE [LARGE SCALE GENOMIC DNA]</scope>
    <source>
        <strain>SBW25</strain>
    </source>
</reference>
<sequence>MTAEHDTDTPEPRLNSTEIRILGCLIEKQATNPETYPLTLNALVLACNQKTSREPVMNLSQGQVGQSLRVLEGQGFTRLVMGSRADRWEHRVDKALELVPAQVILTGLLFLRGPQTVNELLTRSGRMHDFEDAEQVVHQLERLIARGLALLVPRQAGQREDRYTHALGDPADIEVIIAARGSPVERGAGSGVSVERIEELEARIALLEERLAKLEPL</sequence>
<proteinExistence type="inferred from homology"/>
<comment type="similarity">
    <text evidence="1">Belongs to the UPF0502 family.</text>
</comment>
<protein>
    <recommendedName>
        <fullName evidence="1">UPF0502 protein PFLU_2135</fullName>
    </recommendedName>
</protein>
<dbReference type="EMBL" id="AM181176">
    <property type="protein sequence ID" value="CAY48374.1"/>
    <property type="molecule type" value="Genomic_DNA"/>
</dbReference>
<dbReference type="RefSeq" id="WP_012723375.1">
    <property type="nucleotide sequence ID" value="NC_012660.1"/>
</dbReference>
<dbReference type="SMR" id="C3K6R3"/>
<dbReference type="STRING" id="294.SRM1_03642"/>
<dbReference type="eggNOG" id="COG3132">
    <property type="taxonomic scope" value="Bacteria"/>
</dbReference>
<dbReference type="HOGENOM" id="CLU_057831_2_0_6"/>
<dbReference type="OrthoDB" id="9784785at2"/>
<dbReference type="Gene3D" id="1.10.10.10">
    <property type="entry name" value="Winged helix-like DNA-binding domain superfamily/Winged helix DNA-binding domain"/>
    <property type="match status" value="2"/>
</dbReference>
<dbReference type="HAMAP" id="MF_01584">
    <property type="entry name" value="UPF0502"/>
    <property type="match status" value="1"/>
</dbReference>
<dbReference type="InterPro" id="IPR007432">
    <property type="entry name" value="DUF480"/>
</dbReference>
<dbReference type="InterPro" id="IPR036388">
    <property type="entry name" value="WH-like_DNA-bd_sf"/>
</dbReference>
<dbReference type="InterPro" id="IPR036390">
    <property type="entry name" value="WH_DNA-bd_sf"/>
</dbReference>
<dbReference type="PANTHER" id="PTHR38768">
    <property type="entry name" value="UPF0502 PROTEIN YCEH"/>
    <property type="match status" value="1"/>
</dbReference>
<dbReference type="PANTHER" id="PTHR38768:SF1">
    <property type="entry name" value="UPF0502 PROTEIN YCEH"/>
    <property type="match status" value="1"/>
</dbReference>
<dbReference type="Pfam" id="PF04337">
    <property type="entry name" value="DUF480"/>
    <property type="match status" value="1"/>
</dbReference>
<dbReference type="SUPFAM" id="SSF46785">
    <property type="entry name" value="Winged helix' DNA-binding domain"/>
    <property type="match status" value="2"/>
</dbReference>
<evidence type="ECO:0000255" key="1">
    <source>
        <dbReference type="HAMAP-Rule" id="MF_01584"/>
    </source>
</evidence>